<protein>
    <recommendedName>
        <fullName evidence="1">Glutamate racemase</fullName>
        <ecNumber evidence="1">5.1.1.3</ecNumber>
    </recommendedName>
</protein>
<comment type="function">
    <text evidence="1">Provides the (R)-glutamate required for cell wall biosynthesis.</text>
</comment>
<comment type="catalytic activity">
    <reaction evidence="1">
        <text>L-glutamate = D-glutamate</text>
        <dbReference type="Rhea" id="RHEA:12813"/>
        <dbReference type="ChEBI" id="CHEBI:29985"/>
        <dbReference type="ChEBI" id="CHEBI:29986"/>
        <dbReference type="EC" id="5.1.1.3"/>
    </reaction>
</comment>
<comment type="pathway">
    <text evidence="1">Cell wall biogenesis; peptidoglycan biosynthesis.</text>
</comment>
<comment type="similarity">
    <text evidence="1">Belongs to the aspartate/glutamate racemases family.</text>
</comment>
<dbReference type="EC" id="5.1.1.3" evidence="1"/>
<dbReference type="EMBL" id="AE014299">
    <property type="protein sequence ID" value="AAN53293.1"/>
    <property type="molecule type" value="Genomic_DNA"/>
</dbReference>
<dbReference type="RefSeq" id="NP_715848.3">
    <property type="nucleotide sequence ID" value="NC_004347.2"/>
</dbReference>
<dbReference type="RefSeq" id="WP_011070599.1">
    <property type="nucleotide sequence ID" value="NC_004347.2"/>
</dbReference>
<dbReference type="SMR" id="Q8EK90"/>
<dbReference type="STRING" id="211586.SO_0207"/>
<dbReference type="PaxDb" id="211586-SO_0207"/>
<dbReference type="KEGG" id="son:SO_0207"/>
<dbReference type="PATRIC" id="fig|211586.12.peg.195"/>
<dbReference type="eggNOG" id="COG0796">
    <property type="taxonomic scope" value="Bacteria"/>
</dbReference>
<dbReference type="HOGENOM" id="CLU_052344_2_0_6"/>
<dbReference type="OrthoDB" id="9801055at2"/>
<dbReference type="PhylomeDB" id="Q8EK90"/>
<dbReference type="BioCyc" id="SONE211586:G1GMP-191-MONOMER"/>
<dbReference type="UniPathway" id="UPA00219"/>
<dbReference type="Proteomes" id="UP000008186">
    <property type="component" value="Chromosome"/>
</dbReference>
<dbReference type="GO" id="GO:0008881">
    <property type="term" value="F:glutamate racemase activity"/>
    <property type="evidence" value="ECO:0000318"/>
    <property type="project" value="GO_Central"/>
</dbReference>
<dbReference type="GO" id="GO:0071555">
    <property type="term" value="P:cell wall organization"/>
    <property type="evidence" value="ECO:0007669"/>
    <property type="project" value="UniProtKB-KW"/>
</dbReference>
<dbReference type="GO" id="GO:0009252">
    <property type="term" value="P:peptidoglycan biosynthetic process"/>
    <property type="evidence" value="ECO:0000318"/>
    <property type="project" value="GO_Central"/>
</dbReference>
<dbReference type="GO" id="GO:0008360">
    <property type="term" value="P:regulation of cell shape"/>
    <property type="evidence" value="ECO:0007669"/>
    <property type="project" value="UniProtKB-KW"/>
</dbReference>
<dbReference type="FunFam" id="3.40.50.1860:FF:000001">
    <property type="entry name" value="Glutamate racemase"/>
    <property type="match status" value="1"/>
</dbReference>
<dbReference type="Gene3D" id="3.40.50.1860">
    <property type="match status" value="2"/>
</dbReference>
<dbReference type="HAMAP" id="MF_00258">
    <property type="entry name" value="Glu_racemase"/>
    <property type="match status" value="1"/>
</dbReference>
<dbReference type="InterPro" id="IPR015942">
    <property type="entry name" value="Asp/Glu/hydantoin_racemase"/>
</dbReference>
<dbReference type="InterPro" id="IPR001920">
    <property type="entry name" value="Asp/Glu_race"/>
</dbReference>
<dbReference type="InterPro" id="IPR018187">
    <property type="entry name" value="Asp/Glu_racemase_AS_1"/>
</dbReference>
<dbReference type="InterPro" id="IPR033134">
    <property type="entry name" value="Asp/Glu_racemase_AS_2"/>
</dbReference>
<dbReference type="InterPro" id="IPR004391">
    <property type="entry name" value="Glu_race"/>
</dbReference>
<dbReference type="NCBIfam" id="TIGR00067">
    <property type="entry name" value="glut_race"/>
    <property type="match status" value="1"/>
</dbReference>
<dbReference type="PANTHER" id="PTHR21198">
    <property type="entry name" value="GLUTAMATE RACEMASE"/>
    <property type="match status" value="1"/>
</dbReference>
<dbReference type="PANTHER" id="PTHR21198:SF2">
    <property type="entry name" value="GLUTAMATE RACEMASE"/>
    <property type="match status" value="1"/>
</dbReference>
<dbReference type="Pfam" id="PF01177">
    <property type="entry name" value="Asp_Glu_race"/>
    <property type="match status" value="1"/>
</dbReference>
<dbReference type="SUPFAM" id="SSF53681">
    <property type="entry name" value="Aspartate/glutamate racemase"/>
    <property type="match status" value="2"/>
</dbReference>
<dbReference type="PROSITE" id="PS00923">
    <property type="entry name" value="ASP_GLU_RACEMASE_1"/>
    <property type="match status" value="1"/>
</dbReference>
<dbReference type="PROSITE" id="PS00924">
    <property type="entry name" value="ASP_GLU_RACEMASE_2"/>
    <property type="match status" value="1"/>
</dbReference>
<keyword id="KW-0133">Cell shape</keyword>
<keyword id="KW-0961">Cell wall biogenesis/degradation</keyword>
<keyword id="KW-0413">Isomerase</keyword>
<keyword id="KW-0573">Peptidoglycan synthesis</keyword>
<keyword id="KW-1185">Reference proteome</keyword>
<proteinExistence type="inferred from homology"/>
<accession>Q8EK90</accession>
<organism>
    <name type="scientific">Shewanella oneidensis (strain ATCC 700550 / JCM 31522 / CIP 106686 / LMG 19005 / NCIMB 14063 / MR-1)</name>
    <dbReference type="NCBI Taxonomy" id="211586"/>
    <lineage>
        <taxon>Bacteria</taxon>
        <taxon>Pseudomonadati</taxon>
        <taxon>Pseudomonadota</taxon>
        <taxon>Gammaproteobacteria</taxon>
        <taxon>Alteromonadales</taxon>
        <taxon>Shewanellaceae</taxon>
        <taxon>Shewanella</taxon>
    </lineage>
</organism>
<sequence length="273" mass="29522">MSQPILVFDSGIGGLSVLAEIRKRLPHHDYCYVFDNARLPYGELEEQELVSGCVALISQLVERTHACIVVVACNTASTVVLPALRAKLHIPVVGVVPAIKPAALLSKSKRIGLLATPGTVKRHYTHELISQFADDCHVELFGCSELVMMAEHKIATGQLGIARLTQILSPVVDANLDVLVLGCTHFPMLRDELQQVLGLGVTLLDSGAAIAKRVDTLLAHGKNISHNSEYERNGSLMRAFYTKAEITEGLATTLADCGFSTLERITTINSNSD</sequence>
<gene>
    <name evidence="1" type="primary">murI</name>
    <name type="ordered locus">SO_0207</name>
</gene>
<name>MURI_SHEON</name>
<feature type="chain" id="PRO_0000095505" description="Glutamate racemase">
    <location>
        <begin position="1"/>
        <end position="273"/>
    </location>
</feature>
<feature type="active site" description="Proton donor/acceptor" evidence="1">
    <location>
        <position position="73"/>
    </location>
</feature>
<feature type="active site" description="Proton donor/acceptor" evidence="1">
    <location>
        <position position="183"/>
    </location>
</feature>
<feature type="binding site" evidence="1">
    <location>
        <begin position="9"/>
        <end position="10"/>
    </location>
    <ligand>
        <name>substrate</name>
    </ligand>
</feature>
<feature type="binding site" evidence="1">
    <location>
        <begin position="41"/>
        <end position="42"/>
    </location>
    <ligand>
        <name>substrate</name>
    </ligand>
</feature>
<feature type="binding site" evidence="1">
    <location>
        <begin position="74"/>
        <end position="75"/>
    </location>
    <ligand>
        <name>substrate</name>
    </ligand>
</feature>
<feature type="binding site" evidence="1">
    <location>
        <begin position="184"/>
        <end position="185"/>
    </location>
    <ligand>
        <name>substrate</name>
    </ligand>
</feature>
<reference key="1">
    <citation type="journal article" date="2002" name="Nat. Biotechnol.">
        <title>Genome sequence of the dissimilatory metal ion-reducing bacterium Shewanella oneidensis.</title>
        <authorList>
            <person name="Heidelberg J.F."/>
            <person name="Paulsen I.T."/>
            <person name="Nelson K.E."/>
            <person name="Gaidos E.J."/>
            <person name="Nelson W.C."/>
            <person name="Read T.D."/>
            <person name="Eisen J.A."/>
            <person name="Seshadri R."/>
            <person name="Ward N.L."/>
            <person name="Methe B.A."/>
            <person name="Clayton R.A."/>
            <person name="Meyer T."/>
            <person name="Tsapin A."/>
            <person name="Scott J."/>
            <person name="Beanan M.J."/>
            <person name="Brinkac L.M."/>
            <person name="Daugherty S.C."/>
            <person name="DeBoy R.T."/>
            <person name="Dodson R.J."/>
            <person name="Durkin A.S."/>
            <person name="Haft D.H."/>
            <person name="Kolonay J.F."/>
            <person name="Madupu R."/>
            <person name="Peterson J.D."/>
            <person name="Umayam L.A."/>
            <person name="White O."/>
            <person name="Wolf A.M."/>
            <person name="Vamathevan J.J."/>
            <person name="Weidman J.F."/>
            <person name="Impraim M."/>
            <person name="Lee K."/>
            <person name="Berry K.J."/>
            <person name="Lee C."/>
            <person name="Mueller J."/>
            <person name="Khouri H.M."/>
            <person name="Gill J."/>
            <person name="Utterback T.R."/>
            <person name="McDonald L.A."/>
            <person name="Feldblyum T.V."/>
            <person name="Smith H.O."/>
            <person name="Venter J.C."/>
            <person name="Nealson K.H."/>
            <person name="Fraser C.M."/>
        </authorList>
    </citation>
    <scope>NUCLEOTIDE SEQUENCE [LARGE SCALE GENOMIC DNA]</scope>
    <source>
        <strain>ATCC 700550 / JCM 31522 / CIP 106686 / LMG 19005 / NCIMB 14063 / MR-1</strain>
    </source>
</reference>
<evidence type="ECO:0000255" key="1">
    <source>
        <dbReference type="HAMAP-Rule" id="MF_00258"/>
    </source>
</evidence>